<evidence type="ECO:0000255" key="1">
    <source>
        <dbReference type="HAMAP-Rule" id="MF_01855"/>
    </source>
</evidence>
<feature type="chain" id="PRO_0000364592" description="Fructose-1,6-bisphosphatase class 1">
    <location>
        <begin position="1"/>
        <end position="338"/>
    </location>
</feature>
<feature type="binding site" evidence="1">
    <location>
        <position position="92"/>
    </location>
    <ligand>
        <name>Mg(2+)</name>
        <dbReference type="ChEBI" id="CHEBI:18420"/>
        <label>1</label>
    </ligand>
</feature>
<feature type="binding site" evidence="1">
    <location>
        <position position="113"/>
    </location>
    <ligand>
        <name>Mg(2+)</name>
        <dbReference type="ChEBI" id="CHEBI:18420"/>
        <label>1</label>
    </ligand>
</feature>
<feature type="binding site" evidence="1">
    <location>
        <position position="113"/>
    </location>
    <ligand>
        <name>Mg(2+)</name>
        <dbReference type="ChEBI" id="CHEBI:18420"/>
        <label>2</label>
    </ligand>
</feature>
<feature type="binding site" evidence="1">
    <location>
        <position position="115"/>
    </location>
    <ligand>
        <name>Mg(2+)</name>
        <dbReference type="ChEBI" id="CHEBI:18420"/>
        <label>1</label>
    </ligand>
</feature>
<feature type="binding site" evidence="1">
    <location>
        <begin position="116"/>
        <end position="119"/>
    </location>
    <ligand>
        <name>substrate</name>
    </ligand>
</feature>
<feature type="binding site" evidence="1">
    <location>
        <position position="116"/>
    </location>
    <ligand>
        <name>Mg(2+)</name>
        <dbReference type="ChEBI" id="CHEBI:18420"/>
        <label>2</label>
    </ligand>
</feature>
<feature type="binding site" evidence="1">
    <location>
        <position position="208"/>
    </location>
    <ligand>
        <name>substrate</name>
    </ligand>
</feature>
<feature type="binding site" evidence="1">
    <location>
        <position position="274"/>
    </location>
    <ligand>
        <name>substrate</name>
    </ligand>
</feature>
<feature type="binding site" evidence="1">
    <location>
        <position position="280"/>
    </location>
    <ligand>
        <name>Mg(2+)</name>
        <dbReference type="ChEBI" id="CHEBI:18420"/>
        <label>2</label>
    </ligand>
</feature>
<reference key="1">
    <citation type="journal article" date="2005" name="DNA Res.">
        <title>Complete genome sequence of the facultative anaerobic magnetotactic bacterium Magnetospirillum sp. strain AMB-1.</title>
        <authorList>
            <person name="Matsunaga T."/>
            <person name="Okamura Y."/>
            <person name="Fukuda Y."/>
            <person name="Wahyudi A.T."/>
            <person name="Murase Y."/>
            <person name="Takeyama H."/>
        </authorList>
    </citation>
    <scope>NUCLEOTIDE SEQUENCE [LARGE SCALE GENOMIC DNA]</scope>
    <source>
        <strain>ATCC 700264 / AMB-1</strain>
    </source>
</reference>
<proteinExistence type="inferred from homology"/>
<accession>Q2W3W0</accession>
<keyword id="KW-0119">Carbohydrate metabolism</keyword>
<keyword id="KW-0963">Cytoplasm</keyword>
<keyword id="KW-0378">Hydrolase</keyword>
<keyword id="KW-0460">Magnesium</keyword>
<keyword id="KW-0479">Metal-binding</keyword>
<name>F16PA_PARM1</name>
<organism>
    <name type="scientific">Paramagnetospirillum magneticum (strain ATCC 700264 / AMB-1)</name>
    <name type="common">Magnetospirillum magneticum</name>
    <dbReference type="NCBI Taxonomy" id="342108"/>
    <lineage>
        <taxon>Bacteria</taxon>
        <taxon>Pseudomonadati</taxon>
        <taxon>Pseudomonadota</taxon>
        <taxon>Alphaproteobacteria</taxon>
        <taxon>Rhodospirillales</taxon>
        <taxon>Magnetospirillaceae</taxon>
        <taxon>Paramagnetospirillum</taxon>
    </lineage>
</organism>
<protein>
    <recommendedName>
        <fullName evidence="1">Fructose-1,6-bisphosphatase class 1</fullName>
        <shortName evidence="1">FBPase class 1</shortName>
        <ecNumber evidence="1">3.1.3.11</ecNumber>
    </recommendedName>
    <alternativeName>
        <fullName evidence="1">D-fructose-1,6-bisphosphate 1-phosphohydrolase class 1</fullName>
    </alternativeName>
</protein>
<comment type="catalytic activity">
    <reaction evidence="1">
        <text>beta-D-fructose 1,6-bisphosphate + H2O = beta-D-fructose 6-phosphate + phosphate</text>
        <dbReference type="Rhea" id="RHEA:11064"/>
        <dbReference type="ChEBI" id="CHEBI:15377"/>
        <dbReference type="ChEBI" id="CHEBI:32966"/>
        <dbReference type="ChEBI" id="CHEBI:43474"/>
        <dbReference type="ChEBI" id="CHEBI:57634"/>
        <dbReference type="EC" id="3.1.3.11"/>
    </reaction>
</comment>
<comment type="cofactor">
    <cofactor evidence="1">
        <name>Mg(2+)</name>
        <dbReference type="ChEBI" id="CHEBI:18420"/>
    </cofactor>
    <text evidence="1">Binds 2 magnesium ions per subunit.</text>
</comment>
<comment type="pathway">
    <text evidence="1">Carbohydrate biosynthesis; gluconeogenesis.</text>
</comment>
<comment type="subunit">
    <text evidence="1">Homotetramer.</text>
</comment>
<comment type="subcellular location">
    <subcellularLocation>
        <location evidence="1">Cytoplasm</location>
    </subcellularLocation>
</comment>
<comment type="similarity">
    <text evidence="1">Belongs to the FBPase class 1 family.</text>
</comment>
<dbReference type="EC" id="3.1.3.11" evidence="1"/>
<dbReference type="EMBL" id="AP007255">
    <property type="protein sequence ID" value="BAE51465.1"/>
    <property type="molecule type" value="Genomic_DNA"/>
</dbReference>
<dbReference type="RefSeq" id="WP_011385041.1">
    <property type="nucleotide sequence ID" value="NC_007626.1"/>
</dbReference>
<dbReference type="SMR" id="Q2W3W0"/>
<dbReference type="STRING" id="342108.amb2661"/>
<dbReference type="KEGG" id="mag:amb2661"/>
<dbReference type="HOGENOM" id="CLU_039977_0_0_5"/>
<dbReference type="OrthoDB" id="9806756at2"/>
<dbReference type="UniPathway" id="UPA00138"/>
<dbReference type="Proteomes" id="UP000007058">
    <property type="component" value="Chromosome"/>
</dbReference>
<dbReference type="GO" id="GO:0005829">
    <property type="term" value="C:cytosol"/>
    <property type="evidence" value="ECO:0007669"/>
    <property type="project" value="TreeGrafter"/>
</dbReference>
<dbReference type="GO" id="GO:0042132">
    <property type="term" value="F:fructose 1,6-bisphosphate 1-phosphatase activity"/>
    <property type="evidence" value="ECO:0007669"/>
    <property type="project" value="UniProtKB-UniRule"/>
</dbReference>
<dbReference type="GO" id="GO:0000287">
    <property type="term" value="F:magnesium ion binding"/>
    <property type="evidence" value="ECO:0007669"/>
    <property type="project" value="UniProtKB-UniRule"/>
</dbReference>
<dbReference type="GO" id="GO:0030388">
    <property type="term" value="P:fructose 1,6-bisphosphate metabolic process"/>
    <property type="evidence" value="ECO:0007669"/>
    <property type="project" value="TreeGrafter"/>
</dbReference>
<dbReference type="GO" id="GO:0006002">
    <property type="term" value="P:fructose 6-phosphate metabolic process"/>
    <property type="evidence" value="ECO:0007669"/>
    <property type="project" value="TreeGrafter"/>
</dbReference>
<dbReference type="GO" id="GO:0006000">
    <property type="term" value="P:fructose metabolic process"/>
    <property type="evidence" value="ECO:0007669"/>
    <property type="project" value="TreeGrafter"/>
</dbReference>
<dbReference type="GO" id="GO:0006094">
    <property type="term" value="P:gluconeogenesis"/>
    <property type="evidence" value="ECO:0007669"/>
    <property type="project" value="UniProtKB-UniRule"/>
</dbReference>
<dbReference type="GO" id="GO:0005986">
    <property type="term" value="P:sucrose biosynthetic process"/>
    <property type="evidence" value="ECO:0007669"/>
    <property type="project" value="TreeGrafter"/>
</dbReference>
<dbReference type="CDD" id="cd00354">
    <property type="entry name" value="FBPase"/>
    <property type="match status" value="1"/>
</dbReference>
<dbReference type="FunFam" id="3.30.540.10:FF:000002">
    <property type="entry name" value="Fructose-1,6-bisphosphatase class 1"/>
    <property type="match status" value="1"/>
</dbReference>
<dbReference type="FunFam" id="3.40.190.80:FF:000011">
    <property type="entry name" value="Fructose-1,6-bisphosphatase class 1"/>
    <property type="match status" value="1"/>
</dbReference>
<dbReference type="Gene3D" id="3.40.190.80">
    <property type="match status" value="1"/>
</dbReference>
<dbReference type="Gene3D" id="3.30.540.10">
    <property type="entry name" value="Fructose-1,6-Bisphosphatase, subunit A, domain 1"/>
    <property type="match status" value="1"/>
</dbReference>
<dbReference type="HAMAP" id="MF_01855">
    <property type="entry name" value="FBPase_class1"/>
    <property type="match status" value="1"/>
</dbReference>
<dbReference type="InterPro" id="IPR044015">
    <property type="entry name" value="FBPase_C_dom"/>
</dbReference>
<dbReference type="InterPro" id="IPR000146">
    <property type="entry name" value="FBPase_class-1"/>
</dbReference>
<dbReference type="InterPro" id="IPR033391">
    <property type="entry name" value="FBPase_N"/>
</dbReference>
<dbReference type="InterPro" id="IPR028343">
    <property type="entry name" value="FBPtase"/>
</dbReference>
<dbReference type="NCBIfam" id="NF006778">
    <property type="entry name" value="PRK09293.1-1"/>
    <property type="match status" value="1"/>
</dbReference>
<dbReference type="NCBIfam" id="NF006779">
    <property type="entry name" value="PRK09293.1-3"/>
    <property type="match status" value="1"/>
</dbReference>
<dbReference type="NCBIfam" id="NF006780">
    <property type="entry name" value="PRK09293.1-4"/>
    <property type="match status" value="1"/>
</dbReference>
<dbReference type="PANTHER" id="PTHR11556">
    <property type="entry name" value="FRUCTOSE-1,6-BISPHOSPHATASE-RELATED"/>
    <property type="match status" value="1"/>
</dbReference>
<dbReference type="PANTHER" id="PTHR11556:SF35">
    <property type="entry name" value="SEDOHEPTULOSE-1,7-BISPHOSPHATASE, CHLOROPLASTIC"/>
    <property type="match status" value="1"/>
</dbReference>
<dbReference type="Pfam" id="PF00316">
    <property type="entry name" value="FBPase"/>
    <property type="match status" value="1"/>
</dbReference>
<dbReference type="Pfam" id="PF18913">
    <property type="entry name" value="FBPase_C"/>
    <property type="match status" value="1"/>
</dbReference>
<dbReference type="PIRSF" id="PIRSF500210">
    <property type="entry name" value="FBPtase"/>
    <property type="match status" value="1"/>
</dbReference>
<dbReference type="PIRSF" id="PIRSF000904">
    <property type="entry name" value="FBPtase_SBPase"/>
    <property type="match status" value="1"/>
</dbReference>
<dbReference type="PRINTS" id="PR00115">
    <property type="entry name" value="F16BPHPHTASE"/>
</dbReference>
<dbReference type="SUPFAM" id="SSF56655">
    <property type="entry name" value="Carbohydrate phosphatase"/>
    <property type="match status" value="1"/>
</dbReference>
<sequence>MPYKRITLTHFLLQEQRRLGGSGSFTALMTDIIFACKMISHEVNRGALAGNLGVAGSENVQGEEQKKLDVLANDIFLHMNALGGSYAGMASEELEDVHAVHGAADGKYLLLFDPLDGSSNIDVNISVGSIFSILKLPEGANAGSKDAFLQPGVKQVAAGYALYGSSTMLVLTTGNGVNGFTLDNNVGMFLLTHPNMTIPADTKEFAINASRERFWEPPVKRYIDECRQGKEGPRGKDFNMRWVASMVAEVHRILCRGGVFLYPADTENMKKGGKLRLMYEANPMAFIVEQAGGAATTGRGRMMEVPPTGLHQRVPVILGSKEEVERIGAYHAEYDAKK</sequence>
<gene>
    <name evidence="1" type="primary">fbp</name>
    <name type="ordered locus">amb2661</name>
</gene>